<dbReference type="EC" id="2.3.1.234" evidence="1"/>
<dbReference type="EMBL" id="BX571966">
    <property type="protein sequence ID" value="CAH39235.1"/>
    <property type="molecule type" value="Genomic_DNA"/>
</dbReference>
<dbReference type="RefSeq" id="WP_011205675.1">
    <property type="nucleotide sequence ID" value="NC_006351.1"/>
</dbReference>
<dbReference type="RefSeq" id="YP_111766.1">
    <property type="nucleotide sequence ID" value="NC_006351.1"/>
</dbReference>
<dbReference type="SMR" id="Q63JF6"/>
<dbReference type="STRING" id="272560.BPSS1760"/>
<dbReference type="KEGG" id="bps:BPSS1760"/>
<dbReference type="PATRIC" id="fig|272560.51.peg.5191"/>
<dbReference type="eggNOG" id="COG0533">
    <property type="taxonomic scope" value="Bacteria"/>
</dbReference>
<dbReference type="Proteomes" id="UP000000605">
    <property type="component" value="Chromosome 2"/>
</dbReference>
<dbReference type="GO" id="GO:0005737">
    <property type="term" value="C:cytoplasm"/>
    <property type="evidence" value="ECO:0007669"/>
    <property type="project" value="UniProtKB-SubCell"/>
</dbReference>
<dbReference type="GO" id="GO:0005506">
    <property type="term" value="F:iron ion binding"/>
    <property type="evidence" value="ECO:0007669"/>
    <property type="project" value="UniProtKB-UniRule"/>
</dbReference>
<dbReference type="GO" id="GO:0061711">
    <property type="term" value="F:N(6)-L-threonylcarbamoyladenine synthase activity"/>
    <property type="evidence" value="ECO:0007669"/>
    <property type="project" value="UniProtKB-EC"/>
</dbReference>
<dbReference type="GO" id="GO:0002949">
    <property type="term" value="P:tRNA threonylcarbamoyladenosine modification"/>
    <property type="evidence" value="ECO:0007669"/>
    <property type="project" value="UniProtKB-UniRule"/>
</dbReference>
<dbReference type="CDD" id="cd24133">
    <property type="entry name" value="ASKHA_NBD_TsaD_bac"/>
    <property type="match status" value="1"/>
</dbReference>
<dbReference type="FunFam" id="3.30.420.40:FF:000012">
    <property type="entry name" value="tRNA N6-adenosine threonylcarbamoyltransferase"/>
    <property type="match status" value="1"/>
</dbReference>
<dbReference type="FunFam" id="3.30.420.40:FF:000040">
    <property type="entry name" value="tRNA N6-adenosine threonylcarbamoyltransferase"/>
    <property type="match status" value="1"/>
</dbReference>
<dbReference type="Gene3D" id="3.30.420.40">
    <property type="match status" value="2"/>
</dbReference>
<dbReference type="HAMAP" id="MF_01445">
    <property type="entry name" value="TsaD"/>
    <property type="match status" value="1"/>
</dbReference>
<dbReference type="InterPro" id="IPR043129">
    <property type="entry name" value="ATPase_NBD"/>
</dbReference>
<dbReference type="InterPro" id="IPR000905">
    <property type="entry name" value="Gcp-like_dom"/>
</dbReference>
<dbReference type="InterPro" id="IPR017861">
    <property type="entry name" value="KAE1/TsaD"/>
</dbReference>
<dbReference type="InterPro" id="IPR022450">
    <property type="entry name" value="TsaD"/>
</dbReference>
<dbReference type="NCBIfam" id="TIGR00329">
    <property type="entry name" value="gcp_kae1"/>
    <property type="match status" value="1"/>
</dbReference>
<dbReference type="NCBIfam" id="TIGR03723">
    <property type="entry name" value="T6A_TsaD_YgjD"/>
    <property type="match status" value="1"/>
</dbReference>
<dbReference type="PANTHER" id="PTHR11735">
    <property type="entry name" value="TRNA N6-ADENOSINE THREONYLCARBAMOYLTRANSFERASE"/>
    <property type="match status" value="1"/>
</dbReference>
<dbReference type="PANTHER" id="PTHR11735:SF6">
    <property type="entry name" value="TRNA N6-ADENOSINE THREONYLCARBAMOYLTRANSFERASE, MITOCHONDRIAL"/>
    <property type="match status" value="1"/>
</dbReference>
<dbReference type="Pfam" id="PF00814">
    <property type="entry name" value="TsaD"/>
    <property type="match status" value="1"/>
</dbReference>
<dbReference type="PRINTS" id="PR00789">
    <property type="entry name" value="OSIALOPTASE"/>
</dbReference>
<dbReference type="SUPFAM" id="SSF53067">
    <property type="entry name" value="Actin-like ATPase domain"/>
    <property type="match status" value="2"/>
</dbReference>
<comment type="function">
    <text evidence="1">Required for the formation of a threonylcarbamoyl group on adenosine at position 37 (t(6)A37) in tRNAs that read codons beginning with adenine. Is involved in the transfer of the threonylcarbamoyl moiety of threonylcarbamoyl-AMP (TC-AMP) to the N6 group of A37, together with TsaE and TsaB. TsaD likely plays a direct catalytic role in this reaction.</text>
</comment>
<comment type="catalytic activity">
    <reaction evidence="1">
        <text>L-threonylcarbamoyladenylate + adenosine(37) in tRNA = N(6)-L-threonylcarbamoyladenosine(37) in tRNA + AMP + H(+)</text>
        <dbReference type="Rhea" id="RHEA:37059"/>
        <dbReference type="Rhea" id="RHEA-COMP:10162"/>
        <dbReference type="Rhea" id="RHEA-COMP:10163"/>
        <dbReference type="ChEBI" id="CHEBI:15378"/>
        <dbReference type="ChEBI" id="CHEBI:73682"/>
        <dbReference type="ChEBI" id="CHEBI:74411"/>
        <dbReference type="ChEBI" id="CHEBI:74418"/>
        <dbReference type="ChEBI" id="CHEBI:456215"/>
        <dbReference type="EC" id="2.3.1.234"/>
    </reaction>
</comment>
<comment type="cofactor">
    <cofactor evidence="1">
        <name>Fe(2+)</name>
        <dbReference type="ChEBI" id="CHEBI:29033"/>
    </cofactor>
    <text evidence="1">Binds 1 Fe(2+) ion per subunit.</text>
</comment>
<comment type="subcellular location">
    <subcellularLocation>
        <location evidence="1">Cytoplasm</location>
    </subcellularLocation>
</comment>
<comment type="similarity">
    <text evidence="1">Belongs to the KAE1 / TsaD family.</text>
</comment>
<proteinExistence type="inferred from homology"/>
<reference key="1">
    <citation type="journal article" date="2004" name="Proc. Natl. Acad. Sci. U.S.A.">
        <title>Genomic plasticity of the causative agent of melioidosis, Burkholderia pseudomallei.</title>
        <authorList>
            <person name="Holden M.T.G."/>
            <person name="Titball R.W."/>
            <person name="Peacock S.J."/>
            <person name="Cerdeno-Tarraga A.-M."/>
            <person name="Atkins T."/>
            <person name="Crossman L.C."/>
            <person name="Pitt T."/>
            <person name="Churcher C."/>
            <person name="Mungall K.L."/>
            <person name="Bentley S.D."/>
            <person name="Sebaihia M."/>
            <person name="Thomson N.R."/>
            <person name="Bason N."/>
            <person name="Beacham I.R."/>
            <person name="Brooks K."/>
            <person name="Brown K.A."/>
            <person name="Brown N.F."/>
            <person name="Challis G.L."/>
            <person name="Cherevach I."/>
            <person name="Chillingworth T."/>
            <person name="Cronin A."/>
            <person name="Crossett B."/>
            <person name="Davis P."/>
            <person name="DeShazer D."/>
            <person name="Feltwell T."/>
            <person name="Fraser A."/>
            <person name="Hance Z."/>
            <person name="Hauser H."/>
            <person name="Holroyd S."/>
            <person name="Jagels K."/>
            <person name="Keith K.E."/>
            <person name="Maddison M."/>
            <person name="Moule S."/>
            <person name="Price C."/>
            <person name="Quail M.A."/>
            <person name="Rabbinowitsch E."/>
            <person name="Rutherford K."/>
            <person name="Sanders M."/>
            <person name="Simmonds M."/>
            <person name="Songsivilai S."/>
            <person name="Stevens K."/>
            <person name="Tumapa S."/>
            <person name="Vesaratchavest M."/>
            <person name="Whitehead S."/>
            <person name="Yeats C."/>
            <person name="Barrell B.G."/>
            <person name="Oyston P.C.F."/>
            <person name="Parkhill J."/>
        </authorList>
    </citation>
    <scope>NUCLEOTIDE SEQUENCE [LARGE SCALE GENOMIC DNA]</scope>
    <source>
        <strain>K96243</strain>
    </source>
</reference>
<protein>
    <recommendedName>
        <fullName evidence="1">tRNA N6-adenosine threonylcarbamoyltransferase</fullName>
        <ecNumber evidence="1">2.3.1.234</ecNumber>
    </recommendedName>
    <alternativeName>
        <fullName evidence="1">N6-L-threonylcarbamoyladenine synthase</fullName>
        <shortName evidence="1">t(6)A synthase</shortName>
    </alternativeName>
    <alternativeName>
        <fullName evidence="1">t(6)A37 threonylcarbamoyladenosine biosynthesis protein TsaD</fullName>
    </alternativeName>
    <alternativeName>
        <fullName evidence="1">tRNA threonylcarbamoyladenosine biosynthesis protein TsaD</fullName>
    </alternativeName>
</protein>
<gene>
    <name evidence="1" type="primary">tsaD</name>
    <name type="synonym">gcp</name>
    <name type="ordered locus">BPSS1760</name>
</gene>
<accession>Q63JF6</accession>
<organism>
    <name type="scientific">Burkholderia pseudomallei (strain K96243)</name>
    <dbReference type="NCBI Taxonomy" id="272560"/>
    <lineage>
        <taxon>Bacteria</taxon>
        <taxon>Pseudomonadati</taxon>
        <taxon>Pseudomonadota</taxon>
        <taxon>Betaproteobacteria</taxon>
        <taxon>Burkholderiales</taxon>
        <taxon>Burkholderiaceae</taxon>
        <taxon>Burkholderia</taxon>
        <taxon>pseudomallei group</taxon>
    </lineage>
</organism>
<feature type="chain" id="PRO_0000303303" description="tRNA N6-adenosine threonylcarbamoyltransferase">
    <location>
        <begin position="1"/>
        <end position="346"/>
    </location>
</feature>
<feature type="binding site" evidence="1">
    <location>
        <position position="111"/>
    </location>
    <ligand>
        <name>Fe cation</name>
        <dbReference type="ChEBI" id="CHEBI:24875"/>
    </ligand>
</feature>
<feature type="binding site" evidence="1">
    <location>
        <position position="115"/>
    </location>
    <ligand>
        <name>Fe cation</name>
        <dbReference type="ChEBI" id="CHEBI:24875"/>
    </ligand>
</feature>
<feature type="binding site" evidence="1">
    <location>
        <begin position="134"/>
        <end position="138"/>
    </location>
    <ligand>
        <name>substrate</name>
    </ligand>
</feature>
<feature type="binding site" evidence="1">
    <location>
        <position position="167"/>
    </location>
    <ligand>
        <name>substrate</name>
    </ligand>
</feature>
<feature type="binding site" evidence="1">
    <location>
        <position position="180"/>
    </location>
    <ligand>
        <name>substrate</name>
    </ligand>
</feature>
<feature type="binding site" evidence="1">
    <location>
        <position position="279"/>
    </location>
    <ligand>
        <name>substrate</name>
    </ligand>
</feature>
<feature type="binding site" evidence="1">
    <location>
        <position position="307"/>
    </location>
    <ligand>
        <name>Fe cation</name>
        <dbReference type="ChEBI" id="CHEBI:24875"/>
    </ligand>
</feature>
<keyword id="KW-0012">Acyltransferase</keyword>
<keyword id="KW-0963">Cytoplasm</keyword>
<keyword id="KW-0408">Iron</keyword>
<keyword id="KW-0479">Metal-binding</keyword>
<keyword id="KW-1185">Reference proteome</keyword>
<keyword id="KW-0808">Transferase</keyword>
<keyword id="KW-0819">tRNA processing</keyword>
<sequence length="346" mass="36345">MLVLGIESSCDETGLALYDTERGLLAHALHSQIAMHREYGGVVPELASRDHIRRALPLLEEVLAASGARRDDIDAIAFTQGPGLAGALLVGASIANALAFAWDKPTIGIHHLEGHLLSPLLVAEPPPFPFVALLVSGGHTQLMRVSDVGVYETLGETLDDAAGEAFDKTAKLLGLGYPGGPEVSRLAEAGTPGAVVLPRPMLHSVDLDFSFSGLKTAVLTQMKKLEAAHAGGAVLERAKADLARGFVDAAVDVLVAKSLAALKATRLKRLVVAGGVGANRQLRAALSAAAQKRGFDVHYPDLALCTDNGAMIALAGALRLARWPSQASRDYAFTVKPRWDLASLAR</sequence>
<name>TSAD_BURPS</name>
<evidence type="ECO:0000255" key="1">
    <source>
        <dbReference type="HAMAP-Rule" id="MF_01445"/>
    </source>
</evidence>